<organism>
    <name type="scientific">Dehalococcoides mccartyi (strain CBDB1)</name>
    <dbReference type="NCBI Taxonomy" id="255470"/>
    <lineage>
        <taxon>Bacteria</taxon>
        <taxon>Bacillati</taxon>
        <taxon>Chloroflexota</taxon>
        <taxon>Dehalococcoidia</taxon>
        <taxon>Dehalococcoidales</taxon>
        <taxon>Dehalococcoidaceae</taxon>
        <taxon>Dehalococcoides</taxon>
    </lineage>
</organism>
<keyword id="KW-0687">Ribonucleoprotein</keyword>
<keyword id="KW-0689">Ribosomal protein</keyword>
<sequence length="72" mass="7843">MALPKRRLSHSRQGNHRAHVALTAPAVMECPQCNSPKLSHQACSVCGTYNGRTVIDMEAIAKKKADKSKGQQ</sequence>
<proteinExistence type="inferred from homology"/>
<name>RL32_DEHMC</name>
<feature type="chain" id="PRO_0000225720" description="Large ribosomal subunit protein bL32">
    <location>
        <begin position="1"/>
        <end position="72"/>
    </location>
</feature>
<evidence type="ECO:0000255" key="1">
    <source>
        <dbReference type="HAMAP-Rule" id="MF_00340"/>
    </source>
</evidence>
<evidence type="ECO:0000305" key="2"/>
<gene>
    <name evidence="1" type="primary">rpmF</name>
    <name type="ordered locus">cbdbA1203</name>
</gene>
<reference key="1">
    <citation type="journal article" date="2005" name="Nat. Biotechnol.">
        <title>Genome sequence of the chlorinated compound-respiring bacterium Dehalococcoides species strain CBDB1.</title>
        <authorList>
            <person name="Kube M."/>
            <person name="Beck A."/>
            <person name="Zinder S.H."/>
            <person name="Kuhl H."/>
            <person name="Reinhardt R."/>
            <person name="Adrian L."/>
        </authorList>
    </citation>
    <scope>NUCLEOTIDE SEQUENCE [LARGE SCALE GENOMIC DNA]</scope>
    <source>
        <strain>CBDB1</strain>
    </source>
</reference>
<comment type="similarity">
    <text evidence="1">Belongs to the bacterial ribosomal protein bL32 family.</text>
</comment>
<protein>
    <recommendedName>
        <fullName evidence="1">Large ribosomal subunit protein bL32</fullName>
    </recommendedName>
    <alternativeName>
        <fullName evidence="2">50S ribosomal protein L32</fullName>
    </alternativeName>
</protein>
<dbReference type="EMBL" id="AJ965256">
    <property type="protein sequence ID" value="CAI83282.1"/>
    <property type="molecule type" value="Genomic_DNA"/>
</dbReference>
<dbReference type="RefSeq" id="WP_011309633.1">
    <property type="nucleotide sequence ID" value="NC_007356.1"/>
</dbReference>
<dbReference type="SMR" id="Q3ZYG8"/>
<dbReference type="KEGG" id="deh:cbdbA1203"/>
<dbReference type="HOGENOM" id="CLU_129084_1_3_0"/>
<dbReference type="Proteomes" id="UP000000433">
    <property type="component" value="Chromosome"/>
</dbReference>
<dbReference type="GO" id="GO:0015934">
    <property type="term" value="C:large ribosomal subunit"/>
    <property type="evidence" value="ECO:0007669"/>
    <property type="project" value="InterPro"/>
</dbReference>
<dbReference type="GO" id="GO:0003735">
    <property type="term" value="F:structural constituent of ribosome"/>
    <property type="evidence" value="ECO:0007669"/>
    <property type="project" value="InterPro"/>
</dbReference>
<dbReference type="GO" id="GO:0006412">
    <property type="term" value="P:translation"/>
    <property type="evidence" value="ECO:0007669"/>
    <property type="project" value="UniProtKB-UniRule"/>
</dbReference>
<dbReference type="HAMAP" id="MF_00340">
    <property type="entry name" value="Ribosomal_bL32"/>
    <property type="match status" value="1"/>
</dbReference>
<dbReference type="InterPro" id="IPR002677">
    <property type="entry name" value="Ribosomal_bL32"/>
</dbReference>
<dbReference type="InterPro" id="IPR044957">
    <property type="entry name" value="Ribosomal_bL32_bact"/>
</dbReference>
<dbReference type="InterPro" id="IPR011332">
    <property type="entry name" value="Ribosomal_zn-bd"/>
</dbReference>
<dbReference type="NCBIfam" id="TIGR01031">
    <property type="entry name" value="rpmF_bact"/>
    <property type="match status" value="1"/>
</dbReference>
<dbReference type="PANTHER" id="PTHR35534">
    <property type="entry name" value="50S RIBOSOMAL PROTEIN L32"/>
    <property type="match status" value="1"/>
</dbReference>
<dbReference type="PANTHER" id="PTHR35534:SF1">
    <property type="entry name" value="LARGE RIBOSOMAL SUBUNIT PROTEIN BL32"/>
    <property type="match status" value="1"/>
</dbReference>
<dbReference type="Pfam" id="PF01783">
    <property type="entry name" value="Ribosomal_L32p"/>
    <property type="match status" value="1"/>
</dbReference>
<dbReference type="SUPFAM" id="SSF57829">
    <property type="entry name" value="Zn-binding ribosomal proteins"/>
    <property type="match status" value="1"/>
</dbReference>
<accession>Q3ZYG8</accession>